<keyword id="KW-0106">Calcium</keyword>
<keyword id="KW-1015">Disulfide bond</keyword>
<keyword id="KW-0325">Glycoprotein</keyword>
<keyword id="KW-0326">Glycosidase</keyword>
<keyword id="KW-1032">Host cell membrane</keyword>
<keyword id="KW-1043">Host membrane</keyword>
<keyword id="KW-0378">Hydrolase</keyword>
<keyword id="KW-0472">Membrane</keyword>
<keyword id="KW-0479">Metal-binding</keyword>
<keyword id="KW-0735">Signal-anchor</keyword>
<keyword id="KW-0812">Transmembrane</keyword>
<keyword id="KW-1133">Transmembrane helix</keyword>
<keyword id="KW-0946">Virion</keyword>
<dbReference type="EC" id="3.2.1.18" evidence="1"/>
<dbReference type="EMBL" id="M14917">
    <property type="protein sequence ID" value="AAA43245.1"/>
    <property type="molecule type" value="Genomic_RNA"/>
</dbReference>
<dbReference type="SMR" id="P08326"/>
<dbReference type="CAZy" id="GH34">
    <property type="family name" value="Glycoside Hydrolase Family 34"/>
</dbReference>
<dbReference type="GlyCosmos" id="P08326">
    <property type="glycosylation" value="7 sites, No reported glycans"/>
</dbReference>
<dbReference type="GO" id="GO:0020002">
    <property type="term" value="C:host cell plasma membrane"/>
    <property type="evidence" value="ECO:0007669"/>
    <property type="project" value="UniProtKB-SubCell"/>
</dbReference>
<dbReference type="GO" id="GO:0016020">
    <property type="term" value="C:membrane"/>
    <property type="evidence" value="ECO:0007669"/>
    <property type="project" value="UniProtKB-UniRule"/>
</dbReference>
<dbReference type="GO" id="GO:0055036">
    <property type="term" value="C:virion membrane"/>
    <property type="evidence" value="ECO:0007669"/>
    <property type="project" value="UniProtKB-SubCell"/>
</dbReference>
<dbReference type="GO" id="GO:0004308">
    <property type="term" value="F:exo-alpha-sialidase activity"/>
    <property type="evidence" value="ECO:0007669"/>
    <property type="project" value="UniProtKB-UniRule"/>
</dbReference>
<dbReference type="GO" id="GO:0046872">
    <property type="term" value="F:metal ion binding"/>
    <property type="evidence" value="ECO:0007669"/>
    <property type="project" value="UniProtKB-UniRule"/>
</dbReference>
<dbReference type="GO" id="GO:0005975">
    <property type="term" value="P:carbohydrate metabolic process"/>
    <property type="evidence" value="ECO:0007669"/>
    <property type="project" value="InterPro"/>
</dbReference>
<dbReference type="GO" id="GO:0046761">
    <property type="term" value="P:viral budding from plasma membrane"/>
    <property type="evidence" value="ECO:0007669"/>
    <property type="project" value="UniProtKB-UniRule"/>
</dbReference>
<dbReference type="Gene3D" id="2.120.10.10">
    <property type="match status" value="1"/>
</dbReference>
<dbReference type="HAMAP" id="MF_04071">
    <property type="entry name" value="INFV_NRAM"/>
    <property type="match status" value="1"/>
</dbReference>
<dbReference type="InterPro" id="IPR001860">
    <property type="entry name" value="Glyco_hydro_34"/>
</dbReference>
<dbReference type="InterPro" id="IPR036278">
    <property type="entry name" value="Sialidase_sf"/>
</dbReference>
<dbReference type="Pfam" id="PF00064">
    <property type="entry name" value="Neur"/>
    <property type="match status" value="1"/>
</dbReference>
<dbReference type="SUPFAM" id="SSF50939">
    <property type="entry name" value="Sialidases"/>
    <property type="match status" value="1"/>
</dbReference>
<comment type="function">
    <text evidence="1">Catalyzes the removal of terminal sialic acid residues from viral and cellular glycoconjugates. Cleaves off the terminal sialic acids on the glycosylated HA during virus budding to facilitate virus release. Additionally helps virus spread through the circulation by further removing sialic acids from the cell surface. These cleavages prevent self-aggregation and ensure the efficient spread of the progeny virus from cell to cell. Otherwise, infection would be limited to one round of replication. Described as a receptor-destroying enzyme because it cleaves a terminal sialic acid from the cellular receptors. May facilitate viral invasion of the upper airways by cleaving the sialic acid moieties on the mucin of the airway epithelial cells. Likely to plays a role in the budding process through its association with lipid rafts during intracellular transport. May additionally display a raft-association independent effect on budding. Plays a role in the determination of host range restriction on replication and virulence. Sialidase activity in late endosome/lysosome traffic seems to enhance virus replication.</text>
</comment>
<comment type="catalytic activity">
    <reaction evidence="1">
        <text>Hydrolysis of alpha-(2-&gt;3)-, alpha-(2-&gt;6)-, alpha-(2-&gt;8)- glycosidic linkages of terminal sialic acid residues in oligosaccharides, glycoproteins, glycolipids, colominic acid and synthetic substrates.</text>
        <dbReference type="EC" id="3.2.1.18"/>
    </reaction>
</comment>
<comment type="cofactor">
    <cofactor evidence="1">
        <name>Ca(2+)</name>
        <dbReference type="ChEBI" id="CHEBI:29108"/>
    </cofactor>
</comment>
<comment type="activity regulation">
    <text evidence="1">Inhibited by the neuraminidase inhibitors zanamivir (Relenza) and oseltamivir (Tamiflu). These drugs interfere with the release of progeny virus from infected cells and are effective against all influenza strains. Resistance to neuraminidase inhibitors is quite rare.</text>
</comment>
<comment type="subunit">
    <text evidence="1">Homotetramer.</text>
</comment>
<comment type="subcellular location">
    <subcellularLocation>
        <location evidence="1">Virion membrane</location>
    </subcellularLocation>
    <subcellularLocation>
        <location evidence="1">Host apical cell membrane</location>
        <topology evidence="1">Single-pass type II membrane protein</topology>
    </subcellularLocation>
    <text evidence="1">Preferentially accumulates at the apical plasma membrane in infected polarized epithelial cells, which is the virus assembly site. Uses lipid rafts for cell surface transport and apical sorting. In the virion, forms a mushroom-shaped spike on the surface of the membrane.</text>
</comment>
<comment type="domain">
    <text evidence="1">Intact N-terminus is essential for virion morphogenesis. Possesses two apical sorting signals, one in the ectodomain, which is likely to be a glycan, and the other in the transmembrane domain. The transmembrane domain also plays a role in lipid raft association.</text>
</comment>
<comment type="PTM">
    <text evidence="1">N-glycosylated.</text>
</comment>
<comment type="miscellaneous">
    <text>The influenza A genome consist of 8 RNA segments. Genetic variation of hemagglutinin and/or neuraminidase genes results in the emergence of new influenza strains. The mechanism of variation can be the result of point mutations or the result of genetic reassortment between segments of two different strains.</text>
</comment>
<comment type="similarity">
    <text evidence="1">Belongs to the glycosyl hydrolase 34 family.</text>
</comment>
<organism>
    <name type="scientific">Influenza A virus (strain A/Equine/Kentucky/1/1981)</name>
    <dbReference type="NCBI Taxonomy" id="475467"/>
    <lineage>
        <taxon>Viruses</taxon>
        <taxon>Riboviria</taxon>
        <taxon>Orthornavirae</taxon>
        <taxon>Negarnaviricota</taxon>
        <taxon>Polyploviricotina</taxon>
        <taxon>Insthoviricetes</taxon>
        <taxon>Articulavirales</taxon>
        <taxon>Orthomyxoviridae</taxon>
        <taxon>Alphainfluenzavirus</taxon>
        <taxon>Alphainfluenzavirus influenzae</taxon>
        <taxon>Influenza A virus</taxon>
    </lineage>
</organism>
<organismHost>
    <name type="scientific">Aves</name>
    <dbReference type="NCBI Taxonomy" id="8782"/>
</organismHost>
<organismHost>
    <name type="scientific">Equus caballus</name>
    <name type="common">Horse</name>
    <dbReference type="NCBI Taxonomy" id="9796"/>
</organismHost>
<protein>
    <recommendedName>
        <fullName evidence="1">Neuraminidase</fullName>
        <ecNumber evidence="1">3.2.1.18</ecNumber>
    </recommendedName>
</protein>
<sequence length="470" mass="52171">MNPNQKIIAIGSASLGILILNVILHVVSIIVTVLVLNNNGTGLNCNGTIIREYNETVRVERITQWYNTNTIEYIERPSNEYYMNNTEPLCEAQGFAPFSKDNGIRIGSRGHVFVIREPFVSCSPLECRTFFLTQGSLLNDKHSNGTVKDRSPYRTLMSVKVGQSPNVYQARFESVAWSATACHDGKKWMTVGVTGPDNQAVAVVNYGGVPVDIINSWGRDILRTQESSCTCIKGDCYWVMTDGPANRQAKYRIFKAKDGRIIGQTDISFNGGHIEECSCYPNEGKVECVCRDNWTGTNRPILVISPDLSYTVGYLCAGIPTDTPRGEDSQFTGSCTSPLGNKGYGVKGFGFRQGNDVWAGRTISRTSRSGFEIIKIRNGWTQNSKDQIRKQVIIDNLNWSGYSGSFTLPVELTKKGCLVPCFWVEMIRGKPEDTTIWTSSSSIVMCGVDHKIASWSWHDGAILPFDIDKI</sequence>
<gene>
    <name evidence="1" type="primary">NA</name>
</gene>
<name>NRAM_I81A2</name>
<feature type="chain" id="PRO_0000078697" description="Neuraminidase">
    <location>
        <begin position="1"/>
        <end position="470"/>
    </location>
</feature>
<feature type="topological domain" description="Intravirion" evidence="1">
    <location>
        <begin position="1"/>
        <end position="14"/>
    </location>
</feature>
<feature type="transmembrane region" description="Helical" evidence="1">
    <location>
        <begin position="15"/>
        <end position="35"/>
    </location>
</feature>
<feature type="topological domain" description="Virion surface" evidence="1">
    <location>
        <begin position="36"/>
        <end position="470"/>
    </location>
</feature>
<feature type="region of interest" description="Involved in apical transport and lipid raft association" evidence="1">
    <location>
        <begin position="11"/>
        <end position="32"/>
    </location>
</feature>
<feature type="region of interest" description="Hypervariable stalk region" evidence="1">
    <location>
        <begin position="32"/>
        <end position="86"/>
    </location>
</feature>
<feature type="region of interest" description="Head of neuraminidase" evidence="1">
    <location>
        <begin position="89"/>
        <end position="470"/>
    </location>
</feature>
<feature type="active site" description="Proton donor/acceptor" evidence="1">
    <location>
        <position position="149"/>
    </location>
</feature>
<feature type="active site" description="Nucleophile" evidence="1">
    <location>
        <position position="402"/>
    </location>
</feature>
<feature type="binding site" evidence="1">
    <location>
        <position position="116"/>
    </location>
    <ligand>
        <name>substrate</name>
    </ligand>
</feature>
<feature type="binding site" evidence="1">
    <location>
        <position position="150"/>
    </location>
    <ligand>
        <name>substrate</name>
    </ligand>
</feature>
<feature type="binding site" evidence="1">
    <location>
        <begin position="275"/>
        <end position="276"/>
    </location>
    <ligand>
        <name>substrate</name>
    </ligand>
</feature>
<feature type="binding site" evidence="1">
    <location>
        <position position="291"/>
    </location>
    <ligand>
        <name>substrate</name>
    </ligand>
</feature>
<feature type="binding site" evidence="1">
    <location>
        <position position="292"/>
    </location>
    <ligand>
        <name>Ca(2+)</name>
        <dbReference type="ChEBI" id="CHEBI:29108"/>
    </ligand>
</feature>
<feature type="binding site" evidence="1">
    <location>
        <position position="296"/>
    </location>
    <ligand>
        <name>Ca(2+)</name>
        <dbReference type="ChEBI" id="CHEBI:29108"/>
    </ligand>
</feature>
<feature type="binding site" evidence="1">
    <location>
        <position position="322"/>
    </location>
    <ligand>
        <name>Ca(2+)</name>
        <dbReference type="ChEBI" id="CHEBI:29108"/>
    </ligand>
</feature>
<feature type="binding site" evidence="1">
    <location>
        <position position="368"/>
    </location>
    <ligand>
        <name>substrate</name>
    </ligand>
</feature>
<feature type="glycosylation site" description="N-linked (GlcNAc...) asparagine; by host" evidence="1">
    <location>
        <position position="39"/>
    </location>
</feature>
<feature type="glycosylation site" description="N-linked (GlcNAc...) asparagine; by host" evidence="1">
    <location>
        <position position="46"/>
    </location>
</feature>
<feature type="glycosylation site" description="N-linked (GlcNAc...) asparagine; by host" evidence="1">
    <location>
        <position position="54"/>
    </location>
</feature>
<feature type="glycosylation site" description="N-linked (GlcNAc...) asparagine; by host" evidence="1">
    <location>
        <position position="84"/>
    </location>
</feature>
<feature type="glycosylation site" description="N-linked (GlcNAc...) asparagine; by host" evidence="1">
    <location>
        <position position="144"/>
    </location>
</feature>
<feature type="glycosylation site" description="N-linked (GlcNAc...) asparagine; by host" evidence="1">
    <location>
        <position position="293"/>
    </location>
</feature>
<feature type="glycosylation site" description="N-linked (GlcNAc...) asparagine; by host" evidence="1">
    <location>
        <position position="398"/>
    </location>
</feature>
<feature type="disulfide bond" evidence="1">
    <location>
        <begin position="90"/>
        <end position="417"/>
    </location>
</feature>
<feature type="disulfide bond" evidence="1">
    <location>
        <begin position="122"/>
        <end position="127"/>
    </location>
</feature>
<feature type="disulfide bond" evidence="1">
    <location>
        <begin position="182"/>
        <end position="229"/>
    </location>
</feature>
<feature type="disulfide bond" evidence="1">
    <location>
        <begin position="231"/>
        <end position="236"/>
    </location>
</feature>
<feature type="disulfide bond" evidence="1">
    <location>
        <begin position="277"/>
        <end position="290"/>
    </location>
</feature>
<feature type="disulfide bond" evidence="1">
    <location>
        <begin position="279"/>
        <end position="288"/>
    </location>
</feature>
<feature type="disulfide bond" evidence="1">
    <location>
        <begin position="316"/>
        <end position="335"/>
    </location>
</feature>
<feature type="disulfide bond" evidence="1">
    <location>
        <begin position="421"/>
        <end position="446"/>
    </location>
</feature>
<reference key="1">
    <citation type="journal article" date="1986" name="Virology">
        <title>Nucleotide and deduced amino acid sequence of the influenza neuraminidase genes of two equine serotypes.</title>
        <authorList>
            <person name="Dale B."/>
            <person name="Brown R."/>
            <person name="Miller J."/>
            <person name="White R.T."/>
            <person name="Air G.M."/>
            <person name="Cordell B."/>
        </authorList>
    </citation>
    <scope>NUCLEOTIDE SEQUENCE [GENOMIC RNA]</scope>
</reference>
<reference key="2">
    <citation type="journal article" date="2004" name="Virus Res.">
        <title>Assembly and budding of influenza virus.</title>
        <authorList>
            <person name="Nayak D.P."/>
            <person name="Hui E.K."/>
            <person name="Barman S."/>
        </authorList>
    </citation>
    <scope>REVIEW</scope>
</reference>
<reference key="3">
    <citation type="journal article" date="2005" name="N. Engl. J. Med.">
        <title>Neuraminidase inhibitors for influenza.</title>
        <authorList>
            <person name="Moscona A."/>
        </authorList>
    </citation>
    <scope>REVIEW</scope>
</reference>
<reference key="4">
    <citation type="journal article" date="2005" name="Biol. Pharm. Bull.">
        <title>Sialobiology of influenza: molecular mechanism of host range variation of influenza viruses.</title>
        <authorList>
            <person name="Suzuki Y."/>
        </authorList>
    </citation>
    <scope>REVIEW</scope>
</reference>
<accession>P08326</accession>
<evidence type="ECO:0000255" key="1">
    <source>
        <dbReference type="HAMAP-Rule" id="MF_04071"/>
    </source>
</evidence>
<proteinExistence type="inferred from homology"/>